<accession>Q9UJQ1</accession>
<accession>B4DHZ7</accession>
<accession>B7Z9Z9</accession>
<evidence type="ECO:0000250" key="1">
    <source>
        <dbReference type="UniProtKB" id="Q9D387"/>
    </source>
</evidence>
<evidence type="ECO:0000255" key="2"/>
<evidence type="ECO:0000269" key="3">
    <source>
    </source>
</evidence>
<evidence type="ECO:0000303" key="4">
    <source>
    </source>
</evidence>
<evidence type="ECO:0000305" key="5"/>
<evidence type="ECO:0000305" key="6">
    <source>
    </source>
</evidence>
<dbReference type="EMBL" id="AL121740">
    <property type="protein sequence ID" value="CAB57330.1"/>
    <property type="molecule type" value="mRNA"/>
</dbReference>
<dbReference type="EMBL" id="AK295336">
    <property type="protein sequence ID" value="BAG58309.1"/>
    <property type="molecule type" value="mRNA"/>
</dbReference>
<dbReference type="EMBL" id="AK316114">
    <property type="protein sequence ID" value="BAH14485.1"/>
    <property type="molecule type" value="mRNA"/>
</dbReference>
<dbReference type="EMBL" id="AL031652">
    <property type="status" value="NOT_ANNOTATED_CDS"/>
    <property type="molecule type" value="Genomic_DNA"/>
</dbReference>
<dbReference type="EMBL" id="BC050727">
    <property type="protein sequence ID" value="AAH50727.1"/>
    <property type="molecule type" value="mRNA"/>
</dbReference>
<dbReference type="CCDS" id="CCDS13106.1">
    <molecule id="Q9UJQ1-1"/>
</dbReference>
<dbReference type="CCDS" id="CCDS56177.1">
    <molecule id="Q9UJQ1-2"/>
</dbReference>
<dbReference type="RefSeq" id="NP_001186826.1">
    <molecule id="Q9UJQ1-2"/>
    <property type="nucleotide sequence ID" value="NM_001199897.2"/>
</dbReference>
<dbReference type="RefSeq" id="NP_036393.1">
    <molecule id="Q9UJQ1-1"/>
    <property type="nucleotide sequence ID" value="NM_012261.4"/>
</dbReference>
<dbReference type="SMR" id="Q9UJQ1"/>
<dbReference type="BioGRID" id="117292">
    <property type="interactions" value="13"/>
</dbReference>
<dbReference type="FunCoup" id="Q9UJQ1">
    <property type="interactions" value="354"/>
</dbReference>
<dbReference type="IntAct" id="Q9UJQ1">
    <property type="interactions" value="8"/>
</dbReference>
<dbReference type="MINT" id="Q9UJQ1"/>
<dbReference type="STRING" id="9606.ENSP00000246070"/>
<dbReference type="GlyCosmos" id="Q9UJQ1">
    <property type="glycosylation" value="3 sites, No reported glycans"/>
</dbReference>
<dbReference type="GlyGen" id="Q9UJQ1">
    <property type="glycosylation" value="3 sites"/>
</dbReference>
<dbReference type="iPTMnet" id="Q9UJQ1"/>
<dbReference type="PhosphoSitePlus" id="Q9UJQ1"/>
<dbReference type="BioMuta" id="LAMP5"/>
<dbReference type="DMDM" id="26392602"/>
<dbReference type="jPOST" id="Q9UJQ1"/>
<dbReference type="MassIVE" id="Q9UJQ1"/>
<dbReference type="PaxDb" id="9606-ENSP00000246070"/>
<dbReference type="PeptideAtlas" id="Q9UJQ1"/>
<dbReference type="ProteomicsDB" id="84637">
    <molecule id="Q9UJQ1-1"/>
</dbReference>
<dbReference type="ProteomicsDB" id="84638">
    <molecule id="Q9UJQ1-2"/>
</dbReference>
<dbReference type="Antibodypedia" id="24121">
    <property type="antibodies" value="111 antibodies from 19 providers"/>
</dbReference>
<dbReference type="DNASU" id="24141"/>
<dbReference type="Ensembl" id="ENST00000246070.3">
    <molecule id="Q9UJQ1-1"/>
    <property type="protein sequence ID" value="ENSP00000246070.2"/>
    <property type="gene ID" value="ENSG00000125869.10"/>
</dbReference>
<dbReference type="Ensembl" id="ENST00000427562.6">
    <molecule id="Q9UJQ1-2"/>
    <property type="protein sequence ID" value="ENSP00000406360.1"/>
    <property type="gene ID" value="ENSG00000125869.10"/>
</dbReference>
<dbReference type="GeneID" id="24141"/>
<dbReference type="KEGG" id="hsa:24141"/>
<dbReference type="MANE-Select" id="ENST00000246070.3">
    <property type="protein sequence ID" value="ENSP00000246070.2"/>
    <property type="RefSeq nucleotide sequence ID" value="NM_012261.4"/>
    <property type="RefSeq protein sequence ID" value="NP_036393.1"/>
</dbReference>
<dbReference type="UCSC" id="uc002wni.3">
    <molecule id="Q9UJQ1-1"/>
    <property type="organism name" value="human"/>
</dbReference>
<dbReference type="AGR" id="HGNC:16097"/>
<dbReference type="CTD" id="24141"/>
<dbReference type="DisGeNET" id="24141"/>
<dbReference type="GeneCards" id="LAMP5"/>
<dbReference type="HGNC" id="HGNC:16097">
    <property type="gene designation" value="LAMP5"/>
</dbReference>
<dbReference type="HPA" id="ENSG00000125869">
    <property type="expression patterns" value="Tissue enriched (brain)"/>
</dbReference>
<dbReference type="MIM" id="614641">
    <property type="type" value="gene"/>
</dbReference>
<dbReference type="neXtProt" id="NX_Q9UJQ1"/>
<dbReference type="OpenTargets" id="ENSG00000125869"/>
<dbReference type="PharmGKB" id="PA25643"/>
<dbReference type="VEuPathDB" id="HostDB:ENSG00000125869"/>
<dbReference type="eggNOG" id="KOG4818">
    <property type="taxonomic scope" value="Eukaryota"/>
</dbReference>
<dbReference type="GeneTree" id="ENSGT00950000182899"/>
<dbReference type="HOGENOM" id="CLU_090529_0_0_1"/>
<dbReference type="InParanoid" id="Q9UJQ1"/>
<dbReference type="OMA" id="CSQVRMA"/>
<dbReference type="OrthoDB" id="6248302at2759"/>
<dbReference type="PAN-GO" id="Q9UJQ1">
    <property type="GO annotations" value="4 GO annotations based on evolutionary models"/>
</dbReference>
<dbReference type="PhylomeDB" id="Q9UJQ1"/>
<dbReference type="TreeFam" id="TF330776"/>
<dbReference type="PathwayCommons" id="Q9UJQ1"/>
<dbReference type="SignaLink" id="Q9UJQ1"/>
<dbReference type="BioGRID-ORCS" id="24141">
    <property type="hits" value="8 hits in 1142 CRISPR screens"/>
</dbReference>
<dbReference type="ChiTaRS" id="LAMP5">
    <property type="organism name" value="human"/>
</dbReference>
<dbReference type="GenomeRNAi" id="24141"/>
<dbReference type="Pharos" id="Q9UJQ1">
    <property type="development level" value="Tbio"/>
</dbReference>
<dbReference type="PRO" id="PR:Q9UJQ1"/>
<dbReference type="Proteomes" id="UP000005640">
    <property type="component" value="Chromosome 20"/>
</dbReference>
<dbReference type="RNAct" id="Q9UJQ1">
    <property type="molecule type" value="protein"/>
</dbReference>
<dbReference type="Bgee" id="ENSG00000125869">
    <property type="expression patterns" value="Expressed in nucleus accumbens and 130 other cell types or tissues"/>
</dbReference>
<dbReference type="GO" id="GO:0030659">
    <property type="term" value="C:cytoplasmic vesicle membrane"/>
    <property type="evidence" value="ECO:0000250"/>
    <property type="project" value="UniProtKB"/>
</dbReference>
<dbReference type="GO" id="GO:0032590">
    <property type="term" value="C:dendrite membrane"/>
    <property type="evidence" value="ECO:0000250"/>
    <property type="project" value="UniProtKB"/>
</dbReference>
<dbReference type="GO" id="GO:0031901">
    <property type="term" value="C:early endosome membrane"/>
    <property type="evidence" value="ECO:0000250"/>
    <property type="project" value="UniProtKB"/>
</dbReference>
<dbReference type="GO" id="GO:0033116">
    <property type="term" value="C:endoplasmic reticulum-Golgi intermediate compartment membrane"/>
    <property type="evidence" value="ECO:0000314"/>
    <property type="project" value="UniProtKB"/>
</dbReference>
<dbReference type="GO" id="GO:0010008">
    <property type="term" value="C:endosome membrane"/>
    <property type="evidence" value="ECO:0000314"/>
    <property type="project" value="UniProtKB"/>
</dbReference>
<dbReference type="GO" id="GO:0098982">
    <property type="term" value="C:GABA-ergic synapse"/>
    <property type="evidence" value="ECO:0007669"/>
    <property type="project" value="Ensembl"/>
</dbReference>
<dbReference type="GO" id="GO:0032584">
    <property type="term" value="C:growth cone membrane"/>
    <property type="evidence" value="ECO:0000250"/>
    <property type="project" value="UniProtKB"/>
</dbReference>
<dbReference type="GO" id="GO:0031902">
    <property type="term" value="C:late endosome membrane"/>
    <property type="evidence" value="ECO:0000318"/>
    <property type="project" value="GO_Central"/>
</dbReference>
<dbReference type="GO" id="GO:0005765">
    <property type="term" value="C:lysosomal membrane"/>
    <property type="evidence" value="ECO:0000318"/>
    <property type="project" value="GO_Central"/>
</dbReference>
<dbReference type="GO" id="GO:0005886">
    <property type="term" value="C:plasma membrane"/>
    <property type="evidence" value="ECO:0000314"/>
    <property type="project" value="UniProtKB"/>
</dbReference>
<dbReference type="GO" id="GO:0055038">
    <property type="term" value="C:recycling endosome membrane"/>
    <property type="evidence" value="ECO:0000250"/>
    <property type="project" value="UniProtKB"/>
</dbReference>
<dbReference type="GO" id="GO:0030672">
    <property type="term" value="C:synaptic vesicle membrane"/>
    <property type="evidence" value="ECO:0007669"/>
    <property type="project" value="UniProtKB-SubCell"/>
</dbReference>
<dbReference type="GO" id="GO:0072594">
    <property type="term" value="P:establishment of protein localization to organelle"/>
    <property type="evidence" value="ECO:0000318"/>
    <property type="project" value="GO_Central"/>
</dbReference>
<dbReference type="GO" id="GO:0099171">
    <property type="term" value="P:presynaptic modulation of chemical synaptic transmission"/>
    <property type="evidence" value="ECO:0007669"/>
    <property type="project" value="Ensembl"/>
</dbReference>
<dbReference type="FunFam" id="2.40.160.110:FF:000002">
    <property type="entry name" value="lysosome-associated membrane glycoprotein 5 isoform X1"/>
    <property type="match status" value="1"/>
</dbReference>
<dbReference type="Gene3D" id="2.40.160.110">
    <property type="match status" value="1"/>
</dbReference>
<dbReference type="InterPro" id="IPR048528">
    <property type="entry name" value="Lamp2-like_luminal"/>
</dbReference>
<dbReference type="InterPro" id="IPR002000">
    <property type="entry name" value="Lysosome-assoc_membr_glycop"/>
</dbReference>
<dbReference type="PANTHER" id="PTHR11506">
    <property type="entry name" value="LYSOSOME-ASSOCIATED MEMBRANE GLYCOPROTEIN"/>
    <property type="match status" value="1"/>
</dbReference>
<dbReference type="PANTHER" id="PTHR11506:SF35">
    <property type="entry name" value="LYSOSOME-ASSOCIATED MEMBRANE GLYCOPROTEIN 5"/>
    <property type="match status" value="1"/>
</dbReference>
<dbReference type="Pfam" id="PF01299">
    <property type="entry name" value="Lamp2-like_luminal"/>
    <property type="match status" value="1"/>
</dbReference>
<dbReference type="PROSITE" id="PS00310">
    <property type="entry name" value="LAMP_1"/>
    <property type="match status" value="1"/>
</dbReference>
<keyword id="KW-0025">Alternative splicing</keyword>
<keyword id="KW-1003">Cell membrane</keyword>
<keyword id="KW-0966">Cell projection</keyword>
<keyword id="KW-0968">Cytoplasmic vesicle</keyword>
<keyword id="KW-0967">Endosome</keyword>
<keyword id="KW-0325">Glycoprotein</keyword>
<keyword id="KW-0472">Membrane</keyword>
<keyword id="KW-1267">Proteomics identification</keyword>
<keyword id="KW-1185">Reference proteome</keyword>
<keyword id="KW-0732">Signal</keyword>
<keyword id="KW-0770">Synapse</keyword>
<keyword id="KW-0812">Transmembrane</keyword>
<keyword id="KW-1133">Transmembrane helix</keyword>
<gene>
    <name type="primary">LAMP5</name>
    <name type="synonym">C20orf103</name>
</gene>
<proteinExistence type="evidence at protein level"/>
<comment type="function">
    <text evidence="1">Plays a role in short-term synaptic plasticity in a subset of GABAergic neurons in the brain.</text>
</comment>
<comment type="subcellular location">
    <subcellularLocation>
        <location evidence="3">Cell membrane</location>
        <topology evidence="3">Single-pass type I membrane protein</topology>
    </subcellularLocation>
    <subcellularLocation>
        <location evidence="1">Cytoplasmic vesicle</location>
        <location evidence="1">Secretory vesicle</location>
        <location evidence="1">Synaptic vesicle membrane</location>
        <topology evidence="5">Single-pass type I membrane protein</topology>
    </subcellularLocation>
    <subcellularLocation>
        <location evidence="3">Endoplasmic reticulum-Golgi intermediate compartment membrane</location>
        <topology evidence="3">Single-pass type I membrane protein</topology>
    </subcellularLocation>
    <subcellularLocation>
        <location evidence="3">Endosome membrane</location>
        <topology evidence="3">Single-pass type I membrane protein</topology>
    </subcellularLocation>
    <subcellularLocation>
        <location evidence="1">Cytoplasmic vesicle membrane</location>
        <topology evidence="5">Single-pass type I membrane protein</topology>
    </subcellularLocation>
    <subcellularLocation>
        <location evidence="1">Cell projection</location>
        <location evidence="1">Dendrite</location>
    </subcellularLocation>
    <subcellularLocation>
        <location evidence="1">Cell projection</location>
        <location evidence="1">Growth cone membrane</location>
        <topology evidence="5">Single-pass type I membrane protein</topology>
    </subcellularLocation>
    <subcellularLocation>
        <location evidence="1">Early endosome membrane</location>
        <topology evidence="5">Single-pass type I membrane protein</topology>
    </subcellularLocation>
    <subcellularLocation>
        <location evidence="1">Recycling endosome</location>
    </subcellularLocation>
    <text evidence="1 3">Recycles from the vesicles of the endocytic recycling compartment (ERC) to the plasma membrane (By similarity). Colocalizes with UNC93B1 in large endosomal intracellular vesicles (PubMed:21642595). Accumulates in the endoplasmic reticulum-Golgi intermediate compartment (ERGIC) before its disappearance upon activation by CpG dinucleotides (PubMed:21642595). Associates with cortical membranes (PubMed:21642595). Localizes mostly in cytoplasmic vesicles of neuronal cell body (By similarity). Localizes to synaptic vesicles in a subset of GABAergic neurons (By similarity).</text>
</comment>
<comment type="alternative products">
    <event type="alternative splicing"/>
    <isoform>
        <id>Q9UJQ1-1</id>
        <name>1</name>
        <sequence type="displayed"/>
    </isoform>
    <isoform>
        <id>Q9UJQ1-2</id>
        <name>2</name>
        <sequence type="described" ref="VSP_037186"/>
    </isoform>
</comment>
<comment type="tissue specificity">
    <text evidence="3">Expressed in plasmocytoid dendritic cells. Expressed in suprabasal skin keratinocytes and squamous cells (at protein level). Expressed in the brain and weakly in spleen and skin. Expressed in plasmocytoid dendritic cells.</text>
</comment>
<comment type="induction">
    <text evidence="3">Up-regulated upon CpG dinucleotides activation. Down-regulated upon activation by Toll-like receptor (TLR) ligands.</text>
</comment>
<comment type="PTM">
    <text evidence="1">Glycosylated.</text>
</comment>
<comment type="miscellaneous">
    <text evidence="6">Appears to be a novel specific biomarker for blastic plasmocytoid dendritic cells neoplasia.</text>
</comment>
<comment type="similarity">
    <text evidence="5">Belongs to the LAMP family.</text>
</comment>
<reference key="1">
    <citation type="submission" date="1999-10" db="EMBL/GenBank/DDBJ databases">
        <authorList>
            <person name="Stavrides G.S."/>
            <person name="Huckle E.J."/>
            <person name="Deloukas P."/>
        </authorList>
    </citation>
    <scope>NUCLEOTIDE SEQUENCE [LARGE SCALE MRNA] (ISOFORM 1)</scope>
</reference>
<reference key="2">
    <citation type="journal article" date="2004" name="Nat. Genet.">
        <title>Complete sequencing and characterization of 21,243 full-length human cDNAs.</title>
        <authorList>
            <person name="Ota T."/>
            <person name="Suzuki Y."/>
            <person name="Nishikawa T."/>
            <person name="Otsuki T."/>
            <person name="Sugiyama T."/>
            <person name="Irie R."/>
            <person name="Wakamatsu A."/>
            <person name="Hayashi K."/>
            <person name="Sato H."/>
            <person name="Nagai K."/>
            <person name="Kimura K."/>
            <person name="Makita H."/>
            <person name="Sekine M."/>
            <person name="Obayashi M."/>
            <person name="Nishi T."/>
            <person name="Shibahara T."/>
            <person name="Tanaka T."/>
            <person name="Ishii S."/>
            <person name="Yamamoto J."/>
            <person name="Saito K."/>
            <person name="Kawai Y."/>
            <person name="Isono Y."/>
            <person name="Nakamura Y."/>
            <person name="Nagahari K."/>
            <person name="Murakami K."/>
            <person name="Yasuda T."/>
            <person name="Iwayanagi T."/>
            <person name="Wagatsuma M."/>
            <person name="Shiratori A."/>
            <person name="Sudo H."/>
            <person name="Hosoiri T."/>
            <person name="Kaku Y."/>
            <person name="Kodaira H."/>
            <person name="Kondo H."/>
            <person name="Sugawara M."/>
            <person name="Takahashi M."/>
            <person name="Kanda K."/>
            <person name="Yokoi T."/>
            <person name="Furuya T."/>
            <person name="Kikkawa E."/>
            <person name="Omura Y."/>
            <person name="Abe K."/>
            <person name="Kamihara K."/>
            <person name="Katsuta N."/>
            <person name="Sato K."/>
            <person name="Tanikawa M."/>
            <person name="Yamazaki M."/>
            <person name="Ninomiya K."/>
            <person name="Ishibashi T."/>
            <person name="Yamashita H."/>
            <person name="Murakawa K."/>
            <person name="Fujimori K."/>
            <person name="Tanai H."/>
            <person name="Kimata M."/>
            <person name="Watanabe M."/>
            <person name="Hiraoka S."/>
            <person name="Chiba Y."/>
            <person name="Ishida S."/>
            <person name="Ono Y."/>
            <person name="Takiguchi S."/>
            <person name="Watanabe S."/>
            <person name="Yosida M."/>
            <person name="Hotuta T."/>
            <person name="Kusano J."/>
            <person name="Kanehori K."/>
            <person name="Takahashi-Fujii A."/>
            <person name="Hara H."/>
            <person name="Tanase T.-O."/>
            <person name="Nomura Y."/>
            <person name="Togiya S."/>
            <person name="Komai F."/>
            <person name="Hara R."/>
            <person name="Takeuchi K."/>
            <person name="Arita M."/>
            <person name="Imose N."/>
            <person name="Musashino K."/>
            <person name="Yuuki H."/>
            <person name="Oshima A."/>
            <person name="Sasaki N."/>
            <person name="Aotsuka S."/>
            <person name="Yoshikawa Y."/>
            <person name="Matsunawa H."/>
            <person name="Ichihara T."/>
            <person name="Shiohata N."/>
            <person name="Sano S."/>
            <person name="Moriya S."/>
            <person name="Momiyama H."/>
            <person name="Satoh N."/>
            <person name="Takami S."/>
            <person name="Terashima Y."/>
            <person name="Suzuki O."/>
            <person name="Nakagawa S."/>
            <person name="Senoh A."/>
            <person name="Mizoguchi H."/>
            <person name="Goto Y."/>
            <person name="Shimizu F."/>
            <person name="Wakebe H."/>
            <person name="Hishigaki H."/>
            <person name="Watanabe T."/>
            <person name="Sugiyama A."/>
            <person name="Takemoto M."/>
            <person name="Kawakami B."/>
            <person name="Yamazaki M."/>
            <person name="Watanabe K."/>
            <person name="Kumagai A."/>
            <person name="Itakura S."/>
            <person name="Fukuzumi Y."/>
            <person name="Fujimori Y."/>
            <person name="Komiyama M."/>
            <person name="Tashiro H."/>
            <person name="Tanigami A."/>
            <person name="Fujiwara T."/>
            <person name="Ono T."/>
            <person name="Yamada K."/>
            <person name="Fujii Y."/>
            <person name="Ozaki K."/>
            <person name="Hirao M."/>
            <person name="Ohmori Y."/>
            <person name="Kawabata A."/>
            <person name="Hikiji T."/>
            <person name="Kobatake N."/>
            <person name="Inagaki H."/>
            <person name="Ikema Y."/>
            <person name="Okamoto S."/>
            <person name="Okitani R."/>
            <person name="Kawakami T."/>
            <person name="Noguchi S."/>
            <person name="Itoh T."/>
            <person name="Shigeta K."/>
            <person name="Senba T."/>
            <person name="Matsumura K."/>
            <person name="Nakajima Y."/>
            <person name="Mizuno T."/>
            <person name="Morinaga M."/>
            <person name="Sasaki M."/>
            <person name="Togashi T."/>
            <person name="Oyama M."/>
            <person name="Hata H."/>
            <person name="Watanabe M."/>
            <person name="Komatsu T."/>
            <person name="Mizushima-Sugano J."/>
            <person name="Satoh T."/>
            <person name="Shirai Y."/>
            <person name="Takahashi Y."/>
            <person name="Nakagawa K."/>
            <person name="Okumura K."/>
            <person name="Nagase T."/>
            <person name="Nomura N."/>
            <person name="Kikuchi H."/>
            <person name="Masuho Y."/>
            <person name="Yamashita R."/>
            <person name="Nakai K."/>
            <person name="Yada T."/>
            <person name="Nakamura Y."/>
            <person name="Ohara O."/>
            <person name="Isogai T."/>
            <person name="Sugano S."/>
        </authorList>
    </citation>
    <scope>NUCLEOTIDE SEQUENCE [LARGE SCALE MRNA] (ISOFORM 2)</scope>
    <source>
        <tissue>Caudate nucleus</tissue>
        <tissue>Thalamus</tissue>
    </source>
</reference>
<reference key="3">
    <citation type="journal article" date="2001" name="Nature">
        <title>The DNA sequence and comparative analysis of human chromosome 20.</title>
        <authorList>
            <person name="Deloukas P."/>
            <person name="Matthews L.H."/>
            <person name="Ashurst J.L."/>
            <person name="Burton J."/>
            <person name="Gilbert J.G.R."/>
            <person name="Jones M."/>
            <person name="Stavrides G."/>
            <person name="Almeida J.P."/>
            <person name="Babbage A.K."/>
            <person name="Bagguley C.L."/>
            <person name="Bailey J."/>
            <person name="Barlow K.F."/>
            <person name="Bates K.N."/>
            <person name="Beard L.M."/>
            <person name="Beare D.M."/>
            <person name="Beasley O.P."/>
            <person name="Bird C.P."/>
            <person name="Blakey S.E."/>
            <person name="Bridgeman A.M."/>
            <person name="Brown A.J."/>
            <person name="Buck D."/>
            <person name="Burrill W.D."/>
            <person name="Butler A.P."/>
            <person name="Carder C."/>
            <person name="Carter N.P."/>
            <person name="Chapman J.C."/>
            <person name="Clamp M."/>
            <person name="Clark G."/>
            <person name="Clark L.N."/>
            <person name="Clark S.Y."/>
            <person name="Clee C.M."/>
            <person name="Clegg S."/>
            <person name="Cobley V.E."/>
            <person name="Collier R.E."/>
            <person name="Connor R.E."/>
            <person name="Corby N.R."/>
            <person name="Coulson A."/>
            <person name="Coville G.J."/>
            <person name="Deadman R."/>
            <person name="Dhami P.D."/>
            <person name="Dunn M."/>
            <person name="Ellington A.G."/>
            <person name="Frankland J.A."/>
            <person name="Fraser A."/>
            <person name="French L."/>
            <person name="Garner P."/>
            <person name="Grafham D.V."/>
            <person name="Griffiths C."/>
            <person name="Griffiths M.N.D."/>
            <person name="Gwilliam R."/>
            <person name="Hall R.E."/>
            <person name="Hammond S."/>
            <person name="Harley J.L."/>
            <person name="Heath P.D."/>
            <person name="Ho S."/>
            <person name="Holden J.L."/>
            <person name="Howden P.J."/>
            <person name="Huckle E."/>
            <person name="Hunt A.R."/>
            <person name="Hunt S.E."/>
            <person name="Jekosch K."/>
            <person name="Johnson C.M."/>
            <person name="Johnson D."/>
            <person name="Kay M.P."/>
            <person name="Kimberley A.M."/>
            <person name="King A."/>
            <person name="Knights A."/>
            <person name="Laird G.K."/>
            <person name="Lawlor S."/>
            <person name="Lehvaeslaiho M.H."/>
            <person name="Leversha M.A."/>
            <person name="Lloyd C."/>
            <person name="Lloyd D.M."/>
            <person name="Lovell J.D."/>
            <person name="Marsh V.L."/>
            <person name="Martin S.L."/>
            <person name="McConnachie L.J."/>
            <person name="McLay K."/>
            <person name="McMurray A.A."/>
            <person name="Milne S.A."/>
            <person name="Mistry D."/>
            <person name="Moore M.J.F."/>
            <person name="Mullikin J.C."/>
            <person name="Nickerson T."/>
            <person name="Oliver K."/>
            <person name="Parker A."/>
            <person name="Patel R."/>
            <person name="Pearce T.A.V."/>
            <person name="Peck A.I."/>
            <person name="Phillimore B.J.C.T."/>
            <person name="Prathalingam S.R."/>
            <person name="Plumb R.W."/>
            <person name="Ramsay H."/>
            <person name="Rice C.M."/>
            <person name="Ross M.T."/>
            <person name="Scott C.E."/>
            <person name="Sehra H.K."/>
            <person name="Shownkeen R."/>
            <person name="Sims S."/>
            <person name="Skuce C.D."/>
            <person name="Smith M.L."/>
            <person name="Soderlund C."/>
            <person name="Steward C.A."/>
            <person name="Sulston J.E."/>
            <person name="Swann R.M."/>
            <person name="Sycamore N."/>
            <person name="Taylor R."/>
            <person name="Tee L."/>
            <person name="Thomas D.W."/>
            <person name="Thorpe A."/>
            <person name="Tracey A."/>
            <person name="Tromans A.C."/>
            <person name="Vaudin M."/>
            <person name="Wall M."/>
            <person name="Wallis J.M."/>
            <person name="Whitehead S.L."/>
            <person name="Whittaker P."/>
            <person name="Willey D.L."/>
            <person name="Williams L."/>
            <person name="Williams S.A."/>
            <person name="Wilming L."/>
            <person name="Wray P.W."/>
            <person name="Hubbard T."/>
            <person name="Durbin R.M."/>
            <person name="Bentley D.R."/>
            <person name="Beck S."/>
            <person name="Rogers J."/>
        </authorList>
    </citation>
    <scope>NUCLEOTIDE SEQUENCE [LARGE SCALE GENOMIC DNA]</scope>
</reference>
<reference key="4">
    <citation type="journal article" date="2004" name="Genome Res.">
        <title>The status, quality, and expansion of the NIH full-length cDNA project: the Mammalian Gene Collection (MGC).</title>
        <authorList>
            <consortium name="The MGC Project Team"/>
        </authorList>
    </citation>
    <scope>NUCLEOTIDE SEQUENCE [LARGE SCALE MRNA] (ISOFORM 1)</scope>
    <source>
        <tissue>Testis</tissue>
    </source>
</reference>
<reference key="5">
    <citation type="journal article" date="2011" name="Blood">
        <title>BAD-LAMP is a novel biomarker of nonactivated human plasmacytoid dendritic cells.</title>
        <authorList>
            <person name="Defays A."/>
            <person name="David A."/>
            <person name="de Gassart A."/>
            <person name="De Angelis Rigotti F."/>
            <person name="Wenger T."/>
            <person name="Camossetto V."/>
            <person name="Brousset P."/>
            <person name="Petrella T."/>
            <person name="Dalod M."/>
            <person name="Gatti E."/>
            <person name="Pierre P."/>
        </authorList>
    </citation>
    <scope>SUBCELLULAR LOCATION</scope>
    <scope>INDUCTION</scope>
    <scope>MUTAGENESIS OF TYR-276</scope>
    <scope>TISSUE SPECIFICITY</scope>
</reference>
<reference key="6">
    <citation type="journal article" date="2015" name="Proteomics">
        <title>N-terminome analysis of the human mitochondrial proteome.</title>
        <authorList>
            <person name="Vaca Jacome A.S."/>
            <person name="Rabilloud T."/>
            <person name="Schaeffer-Reiss C."/>
            <person name="Rompais M."/>
            <person name="Ayoub D."/>
            <person name="Lane L."/>
            <person name="Bairoch A."/>
            <person name="Van Dorsselaer A."/>
            <person name="Carapito C."/>
        </authorList>
    </citation>
    <scope>IDENTIFICATION BY MASS SPECTROMETRY [LARGE SCALE ANALYSIS]</scope>
</reference>
<feature type="signal peptide" evidence="2">
    <location>
        <begin position="1"/>
        <end position="29"/>
    </location>
</feature>
<feature type="chain" id="PRO_0000021031" description="Lysosome-associated membrane glycoprotein 5">
    <location>
        <begin position="30"/>
        <end position="280"/>
    </location>
</feature>
<feature type="topological domain" description="Extracellular" evidence="2">
    <location>
        <begin position="30"/>
        <end position="235"/>
    </location>
</feature>
<feature type="transmembrane region" description="Helical" evidence="2">
    <location>
        <begin position="236"/>
        <end position="256"/>
    </location>
</feature>
<feature type="topological domain" description="Cytoplasmic" evidence="2">
    <location>
        <begin position="257"/>
        <end position="280"/>
    </location>
</feature>
<feature type="glycosylation site" description="N-linked (GlcNAc...) asparagine" evidence="2">
    <location>
        <position position="35"/>
    </location>
</feature>
<feature type="glycosylation site" description="N-linked (GlcNAc...) asparagine" evidence="2">
    <location>
        <position position="53"/>
    </location>
</feature>
<feature type="glycosylation site" description="N-linked (GlcNAc...) asparagine" evidence="2">
    <location>
        <position position="127"/>
    </location>
</feature>
<feature type="splice variant" id="VSP_037186" description="In isoform 2." evidence="4">
    <location>
        <begin position="80"/>
        <end position="123"/>
    </location>
</feature>
<feature type="sequence variant" id="VAR_014401" description="In dbSNP:rs2232259.">
    <original>D</original>
    <variation>G</variation>
    <location>
        <position position="12"/>
    </location>
</feature>
<feature type="sequence variant" id="VAR_014402" description="In dbSNP:rs2232263.">
    <original>I</original>
    <variation>V</variation>
    <location>
        <position position="81"/>
    </location>
</feature>
<feature type="sequence variant" id="VAR_014403" description="In dbSNP:rs2232264.">
    <original>Q</original>
    <variation>E</variation>
    <location>
        <position position="103"/>
    </location>
</feature>
<feature type="sequence variant" id="VAR_014404" description="In dbSNP:rs2232266.">
    <original>S</original>
    <variation>G</variation>
    <location>
        <position position="158"/>
    </location>
</feature>
<feature type="mutagenesis site" description="Cell surface localization." evidence="3">
    <original>Y</original>
    <variation>A</variation>
    <location>
        <position position="276"/>
    </location>
</feature>
<feature type="sequence conflict" description="In Ref. 2; BAG58309." evidence="5" ref="2">
    <original>V</original>
    <variation>A</variation>
    <location>
        <position position="251"/>
    </location>
</feature>
<sequence length="280" mass="31472">MDLQGRGVPSIDRLRVLLMLFHTMAQIMAEQEVENLSGLSTNPEKDIFVVRENGTTCLMAEFAAKFIVPYDVWASNYVDLITEQADIALTRGAEVKGRCGHSQSELQVFWVDRAYALKMLFVKESHNMSKGPEATWRLSKVQFVYDSSEKTHFKDAVSAGKHTANSHHLSALVTPAGKSYECQAQQTISLASSDPQKTVTMILSAVHIQPFDIISDFVFSEEHKCPVDEREQLEETLPLILGLILGLVIMVTLAIYHVHHKMTANQVQIPRDRSQYKHMG</sequence>
<name>LAMP5_HUMAN</name>
<organism>
    <name type="scientific">Homo sapiens</name>
    <name type="common">Human</name>
    <dbReference type="NCBI Taxonomy" id="9606"/>
    <lineage>
        <taxon>Eukaryota</taxon>
        <taxon>Metazoa</taxon>
        <taxon>Chordata</taxon>
        <taxon>Craniata</taxon>
        <taxon>Vertebrata</taxon>
        <taxon>Euteleostomi</taxon>
        <taxon>Mammalia</taxon>
        <taxon>Eutheria</taxon>
        <taxon>Euarchontoglires</taxon>
        <taxon>Primates</taxon>
        <taxon>Haplorrhini</taxon>
        <taxon>Catarrhini</taxon>
        <taxon>Hominidae</taxon>
        <taxon>Homo</taxon>
    </lineage>
</organism>
<protein>
    <recommendedName>
        <fullName>Lysosome-associated membrane glycoprotein 5</fullName>
    </recommendedName>
    <alternativeName>
        <fullName>Brain and dendritic cell-associated LAMP</fullName>
    </alternativeName>
    <alternativeName>
        <fullName>Brain-associated LAMP-like protein</fullName>
        <shortName>BAD-LAMP</shortName>
    </alternativeName>
    <alternativeName>
        <fullName>Lysosome-associated membrane protein 5</fullName>
        <shortName>LAMP-5</shortName>
    </alternativeName>
</protein>